<reference key="1">
    <citation type="submission" date="2006-10" db="EMBL/GenBank/DDBJ databases">
        <authorList>
            <person name="Fleischmann R.D."/>
            <person name="Dodson R.J."/>
            <person name="Haft D.H."/>
            <person name="Merkel J.S."/>
            <person name="Nelson W.C."/>
            <person name="Fraser C.M."/>
        </authorList>
    </citation>
    <scope>NUCLEOTIDE SEQUENCE [LARGE SCALE GENOMIC DNA]</scope>
    <source>
        <strain>104</strain>
    </source>
</reference>
<comment type="function">
    <text evidence="1">Catalyzes the reductive methylation of 2'-deoxyuridine-5'-monophosphate (dUMP) to 2'-deoxythymidine-5'-monophosphate (dTMP) while utilizing 5,10-methylenetetrahydrofolate (mTHF) as the methyl donor, and NADPH and FADH(2) as the reductant.</text>
</comment>
<comment type="catalytic activity">
    <reaction evidence="1">
        <text>dUMP + (6R)-5,10-methylene-5,6,7,8-tetrahydrofolate + NADPH + H(+) = dTMP + (6S)-5,6,7,8-tetrahydrofolate + NADP(+)</text>
        <dbReference type="Rhea" id="RHEA:29043"/>
        <dbReference type="ChEBI" id="CHEBI:15378"/>
        <dbReference type="ChEBI" id="CHEBI:15636"/>
        <dbReference type="ChEBI" id="CHEBI:57453"/>
        <dbReference type="ChEBI" id="CHEBI:57783"/>
        <dbReference type="ChEBI" id="CHEBI:58349"/>
        <dbReference type="ChEBI" id="CHEBI:63528"/>
        <dbReference type="ChEBI" id="CHEBI:246422"/>
        <dbReference type="EC" id="2.1.1.148"/>
    </reaction>
</comment>
<comment type="cofactor">
    <cofactor evidence="1">
        <name>FAD</name>
        <dbReference type="ChEBI" id="CHEBI:57692"/>
    </cofactor>
    <text evidence="1">Binds 4 FAD per tetramer. Each FAD binding site is formed by three monomers.</text>
</comment>
<comment type="pathway">
    <text evidence="1">Pyrimidine metabolism; dTTP biosynthesis.</text>
</comment>
<comment type="subunit">
    <text evidence="1">Homotetramer.</text>
</comment>
<comment type="similarity">
    <text evidence="1">Belongs to the thymidylate synthase ThyX family.</text>
</comment>
<keyword id="KW-0274">FAD</keyword>
<keyword id="KW-0285">Flavoprotein</keyword>
<keyword id="KW-0489">Methyltransferase</keyword>
<keyword id="KW-0521">NADP</keyword>
<keyword id="KW-0545">Nucleotide biosynthesis</keyword>
<keyword id="KW-0808">Transferase</keyword>
<name>THYX_MYCA1</name>
<sequence>MAEIAPLRVQLIAKTDFLAPPDVPWSTDADGGPALVEFAGRACYQSWSKPNPKTATNAGYIKHIIDVGHFSVLEHASVSFYITGISRSCTHELIRHRHFSYSQLSQRYVPENDSRVVVPPGLDDDPELQQILAAAADASRATYTELLARLEAKFADQPSAVLRRKQARQAARAVLPNATETRIVVTGNYRAWRHFIAMRASEHADVEIRRLAIECLRRLADVAPAVFADFEIATLADGTEVATSPLATEA</sequence>
<gene>
    <name evidence="1" type="primary">thyX</name>
    <name type="ordered locus">MAV_3645</name>
</gene>
<proteinExistence type="inferred from homology"/>
<dbReference type="EC" id="2.1.1.148" evidence="1"/>
<dbReference type="EMBL" id="CP000479">
    <property type="protein sequence ID" value="ABK66863.1"/>
    <property type="molecule type" value="Genomic_DNA"/>
</dbReference>
<dbReference type="RefSeq" id="WP_003878641.1">
    <property type="nucleotide sequence ID" value="NC_008595.1"/>
</dbReference>
<dbReference type="SMR" id="A0QIT4"/>
<dbReference type="GeneID" id="75271033"/>
<dbReference type="KEGG" id="mav:MAV_3645"/>
<dbReference type="HOGENOM" id="CLU_077585_1_0_11"/>
<dbReference type="UniPathway" id="UPA00575"/>
<dbReference type="Proteomes" id="UP000001574">
    <property type="component" value="Chromosome"/>
</dbReference>
<dbReference type="GO" id="GO:0050660">
    <property type="term" value="F:flavin adenine dinucleotide binding"/>
    <property type="evidence" value="ECO:0007669"/>
    <property type="project" value="InterPro"/>
</dbReference>
<dbReference type="GO" id="GO:0070402">
    <property type="term" value="F:NADPH binding"/>
    <property type="evidence" value="ECO:0007669"/>
    <property type="project" value="TreeGrafter"/>
</dbReference>
<dbReference type="GO" id="GO:0050797">
    <property type="term" value="F:thymidylate synthase (FAD) activity"/>
    <property type="evidence" value="ECO:0007669"/>
    <property type="project" value="UniProtKB-UniRule"/>
</dbReference>
<dbReference type="GO" id="GO:0004799">
    <property type="term" value="F:thymidylate synthase activity"/>
    <property type="evidence" value="ECO:0007669"/>
    <property type="project" value="TreeGrafter"/>
</dbReference>
<dbReference type="GO" id="GO:0006231">
    <property type="term" value="P:dTMP biosynthetic process"/>
    <property type="evidence" value="ECO:0007669"/>
    <property type="project" value="UniProtKB-UniRule"/>
</dbReference>
<dbReference type="GO" id="GO:0006235">
    <property type="term" value="P:dTTP biosynthetic process"/>
    <property type="evidence" value="ECO:0007669"/>
    <property type="project" value="UniProtKB-UniRule"/>
</dbReference>
<dbReference type="GO" id="GO:0032259">
    <property type="term" value="P:methylation"/>
    <property type="evidence" value="ECO:0007669"/>
    <property type="project" value="UniProtKB-KW"/>
</dbReference>
<dbReference type="CDD" id="cd20175">
    <property type="entry name" value="ThyX"/>
    <property type="match status" value="1"/>
</dbReference>
<dbReference type="Gene3D" id="3.30.1360.170">
    <property type="match status" value="1"/>
</dbReference>
<dbReference type="Gene3D" id="3.30.70.3180">
    <property type="match status" value="1"/>
</dbReference>
<dbReference type="Gene3D" id="6.10.140.450">
    <property type="match status" value="1"/>
</dbReference>
<dbReference type="HAMAP" id="MF_01408">
    <property type="entry name" value="ThyX"/>
    <property type="match status" value="1"/>
</dbReference>
<dbReference type="InterPro" id="IPR003669">
    <property type="entry name" value="Thymidylate_synthase_ThyX"/>
</dbReference>
<dbReference type="InterPro" id="IPR036098">
    <property type="entry name" value="Thymidylate_synthase_ThyX_sf"/>
</dbReference>
<dbReference type="NCBIfam" id="TIGR02170">
    <property type="entry name" value="thyX"/>
    <property type="match status" value="1"/>
</dbReference>
<dbReference type="PANTHER" id="PTHR34934">
    <property type="entry name" value="FLAVIN-DEPENDENT THYMIDYLATE SYNTHASE"/>
    <property type="match status" value="1"/>
</dbReference>
<dbReference type="PANTHER" id="PTHR34934:SF1">
    <property type="entry name" value="FLAVIN-DEPENDENT THYMIDYLATE SYNTHASE"/>
    <property type="match status" value="1"/>
</dbReference>
<dbReference type="Pfam" id="PF02511">
    <property type="entry name" value="Thy1"/>
    <property type="match status" value="1"/>
</dbReference>
<dbReference type="SUPFAM" id="SSF69796">
    <property type="entry name" value="Thymidylate synthase-complementing protein Thy1"/>
    <property type="match status" value="1"/>
</dbReference>
<dbReference type="PROSITE" id="PS51331">
    <property type="entry name" value="THYX"/>
    <property type="match status" value="1"/>
</dbReference>
<accession>A0QIT4</accession>
<feature type="chain" id="PRO_1000184588" description="Flavin-dependent thymidylate synthase">
    <location>
        <begin position="1"/>
        <end position="250"/>
    </location>
</feature>
<feature type="domain" description="ThyX" evidence="2">
    <location>
        <begin position="7"/>
        <end position="233"/>
    </location>
</feature>
<feature type="short sequence motif" description="ThyX motif" evidence="1">
    <location>
        <begin position="95"/>
        <end position="105"/>
    </location>
</feature>
<feature type="active site" description="Involved in ionization of N3 of dUMP, leading to its activation" evidence="1">
    <location>
        <position position="199"/>
    </location>
</feature>
<feature type="binding site" evidence="1">
    <location>
        <position position="71"/>
    </location>
    <ligand>
        <name>FAD</name>
        <dbReference type="ChEBI" id="CHEBI:57692"/>
        <note>ligand shared between neighboring subunits</note>
    </ligand>
</feature>
<feature type="binding site" evidence="1">
    <location>
        <begin position="92"/>
        <end position="95"/>
    </location>
    <ligand>
        <name>dUMP</name>
        <dbReference type="ChEBI" id="CHEBI:246422"/>
        <note>ligand shared between dimeric partners</note>
    </ligand>
</feature>
<feature type="binding site" evidence="1">
    <location>
        <begin position="95"/>
        <end position="97"/>
    </location>
    <ligand>
        <name>FAD</name>
        <dbReference type="ChEBI" id="CHEBI:57692"/>
        <note>ligand shared between neighboring subunits</note>
    </ligand>
</feature>
<feature type="binding site" description="in other chain" evidence="1">
    <location>
        <begin position="103"/>
        <end position="107"/>
    </location>
    <ligand>
        <name>dUMP</name>
        <dbReference type="ChEBI" id="CHEBI:246422"/>
        <note>ligand shared between dimeric partners</note>
    </ligand>
</feature>
<feature type="binding site" evidence="1">
    <location>
        <position position="103"/>
    </location>
    <ligand>
        <name>FAD</name>
        <dbReference type="ChEBI" id="CHEBI:57692"/>
        <note>ligand shared between neighboring subunits</note>
    </ligand>
</feature>
<feature type="binding site" description="in other chain" evidence="1">
    <location>
        <position position="172"/>
    </location>
    <ligand>
        <name>dUMP</name>
        <dbReference type="ChEBI" id="CHEBI:246422"/>
        <note>ligand shared between dimeric partners</note>
    </ligand>
</feature>
<feature type="binding site" evidence="1">
    <location>
        <begin position="188"/>
        <end position="190"/>
    </location>
    <ligand>
        <name>FAD</name>
        <dbReference type="ChEBI" id="CHEBI:57692"/>
        <note>ligand shared between neighboring subunits</note>
    </ligand>
</feature>
<feature type="binding site" evidence="1">
    <location>
        <position position="194"/>
    </location>
    <ligand>
        <name>FAD</name>
        <dbReference type="ChEBI" id="CHEBI:57692"/>
        <note>ligand shared between neighboring subunits</note>
    </ligand>
</feature>
<feature type="binding site" evidence="1">
    <location>
        <position position="199"/>
    </location>
    <ligand>
        <name>dUMP</name>
        <dbReference type="ChEBI" id="CHEBI:246422"/>
        <note>ligand shared between dimeric partners</note>
    </ligand>
</feature>
<protein>
    <recommendedName>
        <fullName evidence="1">Flavin-dependent thymidylate synthase</fullName>
        <shortName evidence="1">FDTS</shortName>
        <ecNumber evidence="1">2.1.1.148</ecNumber>
    </recommendedName>
    <alternativeName>
        <fullName evidence="1">FAD-dependent thymidylate synthase</fullName>
    </alternativeName>
    <alternativeName>
        <fullName evidence="1">Thymidylate synthase ThyX</fullName>
        <shortName evidence="1">TS</shortName>
        <shortName evidence="1">TSase</shortName>
    </alternativeName>
</protein>
<organism>
    <name type="scientific">Mycobacterium avium (strain 104)</name>
    <dbReference type="NCBI Taxonomy" id="243243"/>
    <lineage>
        <taxon>Bacteria</taxon>
        <taxon>Bacillati</taxon>
        <taxon>Actinomycetota</taxon>
        <taxon>Actinomycetes</taxon>
        <taxon>Mycobacteriales</taxon>
        <taxon>Mycobacteriaceae</taxon>
        <taxon>Mycobacterium</taxon>
        <taxon>Mycobacterium avium complex (MAC)</taxon>
    </lineage>
</organism>
<evidence type="ECO:0000255" key="1">
    <source>
        <dbReference type="HAMAP-Rule" id="MF_01408"/>
    </source>
</evidence>
<evidence type="ECO:0000255" key="2">
    <source>
        <dbReference type="PROSITE-ProRule" id="PRU00661"/>
    </source>
</evidence>